<comment type="function">
    <text evidence="1">Part of the high-affinity ATP-driven potassium transport (or Kdp) system, which catalyzes the hydrolysis of ATP coupled with the electrogenic transport of potassium into the cytoplasm. This subunit acts as a catalytic chaperone that increases the ATP-binding affinity of the ATP-hydrolyzing subunit KdpB by the formation of a transient KdpB/KdpC/ATP ternary complex.</text>
</comment>
<comment type="subunit">
    <text evidence="1">The system is composed of three essential subunits: KdpA, KdpB and KdpC.</text>
</comment>
<comment type="subcellular location">
    <subcellularLocation>
        <location evidence="1">Cell inner membrane</location>
        <topology evidence="1">Single-pass membrane protein</topology>
    </subcellularLocation>
</comment>
<comment type="similarity">
    <text evidence="1">Belongs to the KdpC family.</text>
</comment>
<proteinExistence type="inferred from homology"/>
<evidence type="ECO:0000255" key="1">
    <source>
        <dbReference type="HAMAP-Rule" id="MF_00276"/>
    </source>
</evidence>
<organism>
    <name type="scientific">Pseudomonas entomophila (strain L48)</name>
    <dbReference type="NCBI Taxonomy" id="384676"/>
    <lineage>
        <taxon>Bacteria</taxon>
        <taxon>Pseudomonadati</taxon>
        <taxon>Pseudomonadota</taxon>
        <taxon>Gammaproteobacteria</taxon>
        <taxon>Pseudomonadales</taxon>
        <taxon>Pseudomonadaceae</taxon>
        <taxon>Pseudomonas</taxon>
    </lineage>
</organism>
<accession>Q1I7P1</accession>
<name>KDPC_PSEE4</name>
<protein>
    <recommendedName>
        <fullName evidence="1">Potassium-transporting ATPase KdpC subunit</fullName>
    </recommendedName>
    <alternativeName>
        <fullName evidence="1">ATP phosphohydrolase [potassium-transporting] C chain</fullName>
    </alternativeName>
    <alternativeName>
        <fullName evidence="1">Potassium-binding and translocating subunit C</fullName>
    </alternativeName>
    <alternativeName>
        <fullName evidence="1">Potassium-translocating ATPase C chain</fullName>
    </alternativeName>
</protein>
<feature type="chain" id="PRO_1000022304" description="Potassium-transporting ATPase KdpC subunit">
    <location>
        <begin position="1"/>
        <end position="187"/>
    </location>
</feature>
<feature type="transmembrane region" description="Helical" evidence="1">
    <location>
        <begin position="11"/>
        <end position="31"/>
    </location>
</feature>
<gene>
    <name evidence="1" type="primary">kdpC</name>
    <name type="ordered locus">PSEEN3607</name>
</gene>
<dbReference type="EMBL" id="CT573326">
    <property type="protein sequence ID" value="CAK16338.1"/>
    <property type="molecule type" value="Genomic_DNA"/>
</dbReference>
<dbReference type="RefSeq" id="WP_011534721.1">
    <property type="nucleotide sequence ID" value="NC_008027.1"/>
</dbReference>
<dbReference type="SMR" id="Q1I7P1"/>
<dbReference type="STRING" id="384676.PSEEN3607"/>
<dbReference type="GeneID" id="32806671"/>
<dbReference type="KEGG" id="pen:PSEEN3607"/>
<dbReference type="eggNOG" id="COG2156">
    <property type="taxonomic scope" value="Bacteria"/>
</dbReference>
<dbReference type="HOGENOM" id="CLU_077094_2_0_6"/>
<dbReference type="OrthoDB" id="9788285at2"/>
<dbReference type="Proteomes" id="UP000000658">
    <property type="component" value="Chromosome"/>
</dbReference>
<dbReference type="GO" id="GO:0005886">
    <property type="term" value="C:plasma membrane"/>
    <property type="evidence" value="ECO:0007669"/>
    <property type="project" value="UniProtKB-SubCell"/>
</dbReference>
<dbReference type="GO" id="GO:0005524">
    <property type="term" value="F:ATP binding"/>
    <property type="evidence" value="ECO:0007669"/>
    <property type="project" value="UniProtKB-UniRule"/>
</dbReference>
<dbReference type="GO" id="GO:0008556">
    <property type="term" value="F:P-type potassium transmembrane transporter activity"/>
    <property type="evidence" value="ECO:0007669"/>
    <property type="project" value="InterPro"/>
</dbReference>
<dbReference type="HAMAP" id="MF_00276">
    <property type="entry name" value="KdpC"/>
    <property type="match status" value="1"/>
</dbReference>
<dbReference type="InterPro" id="IPR003820">
    <property type="entry name" value="KdpC"/>
</dbReference>
<dbReference type="NCBIfam" id="TIGR00681">
    <property type="entry name" value="kdpC"/>
    <property type="match status" value="1"/>
</dbReference>
<dbReference type="NCBIfam" id="NF001454">
    <property type="entry name" value="PRK00315.1"/>
    <property type="match status" value="1"/>
</dbReference>
<dbReference type="PANTHER" id="PTHR30042">
    <property type="entry name" value="POTASSIUM-TRANSPORTING ATPASE C CHAIN"/>
    <property type="match status" value="1"/>
</dbReference>
<dbReference type="PANTHER" id="PTHR30042:SF2">
    <property type="entry name" value="POTASSIUM-TRANSPORTING ATPASE KDPC SUBUNIT"/>
    <property type="match status" value="1"/>
</dbReference>
<dbReference type="Pfam" id="PF02669">
    <property type="entry name" value="KdpC"/>
    <property type="match status" value="1"/>
</dbReference>
<dbReference type="PIRSF" id="PIRSF001296">
    <property type="entry name" value="K_ATPase_KdpC"/>
    <property type="match status" value="1"/>
</dbReference>
<sequence length="187" mass="19586">MTAYVRPALSLILLMTVVTGALYPLAVTGIAQVAFPKQANGSLVRDDRGEVRGSALIAQEFKGDGWFQSRPSAGAYATVASSASNLSPSNPALAERVKTDAAAQYQAQQGPVPQALLTTSGSGLDPHLPPEAIAYQLPRVAAARQVSEERLQVLVNDATLRPLIGPPVVNVLALNQALERLAPLAAR</sequence>
<keyword id="KW-0067">ATP-binding</keyword>
<keyword id="KW-0997">Cell inner membrane</keyword>
<keyword id="KW-1003">Cell membrane</keyword>
<keyword id="KW-0406">Ion transport</keyword>
<keyword id="KW-0472">Membrane</keyword>
<keyword id="KW-0547">Nucleotide-binding</keyword>
<keyword id="KW-0630">Potassium</keyword>
<keyword id="KW-0633">Potassium transport</keyword>
<keyword id="KW-0812">Transmembrane</keyword>
<keyword id="KW-1133">Transmembrane helix</keyword>
<keyword id="KW-0813">Transport</keyword>
<reference key="1">
    <citation type="journal article" date="2006" name="Nat. Biotechnol.">
        <title>Complete genome sequence of the entomopathogenic and metabolically versatile soil bacterium Pseudomonas entomophila.</title>
        <authorList>
            <person name="Vodovar N."/>
            <person name="Vallenet D."/>
            <person name="Cruveiller S."/>
            <person name="Rouy Z."/>
            <person name="Barbe V."/>
            <person name="Acosta C."/>
            <person name="Cattolico L."/>
            <person name="Jubin C."/>
            <person name="Lajus A."/>
            <person name="Segurens B."/>
            <person name="Vacherie B."/>
            <person name="Wincker P."/>
            <person name="Weissenbach J."/>
            <person name="Lemaitre B."/>
            <person name="Medigue C."/>
            <person name="Boccard F."/>
        </authorList>
    </citation>
    <scope>NUCLEOTIDE SEQUENCE [LARGE SCALE GENOMIC DNA]</scope>
    <source>
        <strain>L48</strain>
    </source>
</reference>